<keyword id="KW-0489">Methyltransferase</keyword>
<keyword id="KW-0949">S-adenosyl-L-methionine</keyword>
<keyword id="KW-0808">Transferase</keyword>
<keyword id="KW-0831">Ubiquinone biosynthesis</keyword>
<feature type="chain" id="PRO_1000060389" description="Ubiquinone biosynthesis O-methyltransferase">
    <location>
        <begin position="1"/>
        <end position="241"/>
    </location>
</feature>
<feature type="binding site" evidence="1">
    <location>
        <position position="44"/>
    </location>
    <ligand>
        <name>S-adenosyl-L-methionine</name>
        <dbReference type="ChEBI" id="CHEBI:59789"/>
    </ligand>
</feature>
<feature type="binding site" evidence="1">
    <location>
        <position position="64"/>
    </location>
    <ligand>
        <name>S-adenosyl-L-methionine</name>
        <dbReference type="ChEBI" id="CHEBI:59789"/>
    </ligand>
</feature>
<feature type="binding site" evidence="1">
    <location>
        <position position="85"/>
    </location>
    <ligand>
        <name>S-adenosyl-L-methionine</name>
        <dbReference type="ChEBI" id="CHEBI:59789"/>
    </ligand>
</feature>
<feature type="binding site" evidence="1">
    <location>
        <position position="129"/>
    </location>
    <ligand>
        <name>S-adenosyl-L-methionine</name>
        <dbReference type="ChEBI" id="CHEBI:59789"/>
    </ligand>
</feature>
<proteinExistence type="inferred from homology"/>
<dbReference type="EC" id="2.1.1.222" evidence="1"/>
<dbReference type="EC" id="2.1.1.64" evidence="1"/>
<dbReference type="EMBL" id="CP000826">
    <property type="protein sequence ID" value="ABV42368.1"/>
    <property type="molecule type" value="Genomic_DNA"/>
</dbReference>
<dbReference type="SMR" id="A8GGX8"/>
<dbReference type="STRING" id="399741.Spro_3270"/>
<dbReference type="KEGG" id="spe:Spro_3270"/>
<dbReference type="eggNOG" id="COG2227">
    <property type="taxonomic scope" value="Bacteria"/>
</dbReference>
<dbReference type="HOGENOM" id="CLU_042432_5_0_6"/>
<dbReference type="OrthoDB" id="9801538at2"/>
<dbReference type="UniPathway" id="UPA00232"/>
<dbReference type="GO" id="GO:0102208">
    <property type="term" value="F:2-polyprenyl-6-hydroxyphenol methylase activity"/>
    <property type="evidence" value="ECO:0007669"/>
    <property type="project" value="UniProtKB-EC"/>
</dbReference>
<dbReference type="GO" id="GO:0061542">
    <property type="term" value="F:3-demethylubiquinol 3-O-methyltransferase activity"/>
    <property type="evidence" value="ECO:0007669"/>
    <property type="project" value="UniProtKB-UniRule"/>
</dbReference>
<dbReference type="GO" id="GO:0010420">
    <property type="term" value="F:polyprenyldihydroxybenzoate methyltransferase activity"/>
    <property type="evidence" value="ECO:0007669"/>
    <property type="project" value="InterPro"/>
</dbReference>
<dbReference type="GO" id="GO:0032259">
    <property type="term" value="P:methylation"/>
    <property type="evidence" value="ECO:0007669"/>
    <property type="project" value="UniProtKB-KW"/>
</dbReference>
<dbReference type="CDD" id="cd02440">
    <property type="entry name" value="AdoMet_MTases"/>
    <property type="match status" value="1"/>
</dbReference>
<dbReference type="FunFam" id="3.40.50.150:FF:000028">
    <property type="entry name" value="Ubiquinone biosynthesis O-methyltransferase"/>
    <property type="match status" value="1"/>
</dbReference>
<dbReference type="Gene3D" id="3.40.50.150">
    <property type="entry name" value="Vaccinia Virus protein VP39"/>
    <property type="match status" value="1"/>
</dbReference>
<dbReference type="HAMAP" id="MF_00472">
    <property type="entry name" value="UbiG"/>
    <property type="match status" value="1"/>
</dbReference>
<dbReference type="InterPro" id="IPR029063">
    <property type="entry name" value="SAM-dependent_MTases_sf"/>
</dbReference>
<dbReference type="InterPro" id="IPR010233">
    <property type="entry name" value="UbiG_MeTrfase"/>
</dbReference>
<dbReference type="NCBIfam" id="TIGR01983">
    <property type="entry name" value="UbiG"/>
    <property type="match status" value="1"/>
</dbReference>
<dbReference type="PANTHER" id="PTHR43464">
    <property type="entry name" value="METHYLTRANSFERASE"/>
    <property type="match status" value="1"/>
</dbReference>
<dbReference type="PANTHER" id="PTHR43464:SF19">
    <property type="entry name" value="UBIQUINONE BIOSYNTHESIS O-METHYLTRANSFERASE, MITOCHONDRIAL"/>
    <property type="match status" value="1"/>
</dbReference>
<dbReference type="Pfam" id="PF13489">
    <property type="entry name" value="Methyltransf_23"/>
    <property type="match status" value="1"/>
</dbReference>
<dbReference type="SUPFAM" id="SSF53335">
    <property type="entry name" value="S-adenosyl-L-methionine-dependent methyltransferases"/>
    <property type="match status" value="1"/>
</dbReference>
<protein>
    <recommendedName>
        <fullName evidence="1">Ubiquinone biosynthesis O-methyltransferase</fullName>
    </recommendedName>
    <alternativeName>
        <fullName evidence="1">2-polyprenyl-6-hydroxyphenol methylase</fullName>
        <ecNumber evidence="1">2.1.1.222</ecNumber>
    </alternativeName>
    <alternativeName>
        <fullName evidence="1">3-demethylubiquinone 3-O-methyltransferase</fullName>
        <ecNumber evidence="1">2.1.1.64</ecNumber>
    </alternativeName>
</protein>
<reference key="1">
    <citation type="submission" date="2007-09" db="EMBL/GenBank/DDBJ databases">
        <title>Complete sequence of chromosome of Serratia proteamaculans 568.</title>
        <authorList>
            <consortium name="US DOE Joint Genome Institute"/>
            <person name="Copeland A."/>
            <person name="Lucas S."/>
            <person name="Lapidus A."/>
            <person name="Barry K."/>
            <person name="Glavina del Rio T."/>
            <person name="Dalin E."/>
            <person name="Tice H."/>
            <person name="Pitluck S."/>
            <person name="Chain P."/>
            <person name="Malfatti S."/>
            <person name="Shin M."/>
            <person name="Vergez L."/>
            <person name="Schmutz J."/>
            <person name="Larimer F."/>
            <person name="Land M."/>
            <person name="Hauser L."/>
            <person name="Kyrpides N."/>
            <person name="Kim E."/>
            <person name="Taghavi S."/>
            <person name="Newman L."/>
            <person name="Vangronsveld J."/>
            <person name="van der Lelie D."/>
            <person name="Richardson P."/>
        </authorList>
    </citation>
    <scope>NUCLEOTIDE SEQUENCE [LARGE SCALE GENOMIC DNA]</scope>
    <source>
        <strain>568</strain>
    </source>
</reference>
<name>UBIG_SERP5</name>
<organism>
    <name type="scientific">Serratia proteamaculans (strain 568)</name>
    <dbReference type="NCBI Taxonomy" id="399741"/>
    <lineage>
        <taxon>Bacteria</taxon>
        <taxon>Pseudomonadati</taxon>
        <taxon>Pseudomonadota</taxon>
        <taxon>Gammaproteobacteria</taxon>
        <taxon>Enterobacterales</taxon>
        <taxon>Yersiniaceae</taxon>
        <taxon>Serratia</taxon>
    </lineage>
</organism>
<evidence type="ECO:0000255" key="1">
    <source>
        <dbReference type="HAMAP-Rule" id="MF_00472"/>
    </source>
</evidence>
<gene>
    <name evidence="1" type="primary">ubiG</name>
    <name type="ordered locus">Spro_3270</name>
</gene>
<sequence length="241" mass="26845">MNAESSSQAQNVDHHEIAKFEAVASRWWDLEGEFKPLHRINPLRLNYILQRAGGIFDKTVLDVGCGGGILAESMAREGAQVTGLDMGAEPLQVARLHALESGVNVAYIQETVESHAQANPQRYDVVTCMEMLEHVPDPASVVRACAHLVKPGGHVFFSTINRNTKAWLMAVVGAEYILKMVPQGTHDHKKFIRPSELIGWVDGTPLREKHMIGLHYNPITDHFKLGRNVDVNYMVHTQHEG</sequence>
<accession>A8GGX8</accession>
<comment type="function">
    <text evidence="1">O-methyltransferase that catalyzes the 2 O-methylation steps in the ubiquinone biosynthetic pathway.</text>
</comment>
<comment type="catalytic activity">
    <reaction evidence="1">
        <text>a 3-demethylubiquinol + S-adenosyl-L-methionine = a ubiquinol + S-adenosyl-L-homocysteine + H(+)</text>
        <dbReference type="Rhea" id="RHEA:44380"/>
        <dbReference type="Rhea" id="RHEA-COMP:9566"/>
        <dbReference type="Rhea" id="RHEA-COMP:10914"/>
        <dbReference type="ChEBI" id="CHEBI:15378"/>
        <dbReference type="ChEBI" id="CHEBI:17976"/>
        <dbReference type="ChEBI" id="CHEBI:57856"/>
        <dbReference type="ChEBI" id="CHEBI:59789"/>
        <dbReference type="ChEBI" id="CHEBI:84422"/>
        <dbReference type="EC" id="2.1.1.64"/>
    </reaction>
</comment>
<comment type="catalytic activity">
    <reaction evidence="1">
        <text>a 3-(all-trans-polyprenyl)benzene-1,2-diol + S-adenosyl-L-methionine = a 2-methoxy-6-(all-trans-polyprenyl)phenol + S-adenosyl-L-homocysteine + H(+)</text>
        <dbReference type="Rhea" id="RHEA:31411"/>
        <dbReference type="Rhea" id="RHEA-COMP:9550"/>
        <dbReference type="Rhea" id="RHEA-COMP:9551"/>
        <dbReference type="ChEBI" id="CHEBI:15378"/>
        <dbReference type="ChEBI" id="CHEBI:57856"/>
        <dbReference type="ChEBI" id="CHEBI:59789"/>
        <dbReference type="ChEBI" id="CHEBI:62729"/>
        <dbReference type="ChEBI" id="CHEBI:62731"/>
        <dbReference type="EC" id="2.1.1.222"/>
    </reaction>
</comment>
<comment type="pathway">
    <text evidence="1">Cofactor biosynthesis; ubiquinone biosynthesis.</text>
</comment>
<comment type="similarity">
    <text evidence="1">Belongs to the methyltransferase superfamily. UbiG/COQ3 family.</text>
</comment>